<sequence length="712" mass="80059">MFNFFAAAPKGFEYSLASELKEFGATDVKESVAGVYFSASLELAYRITLWTRLASRIVLVIYKGACDSAEQLYNAAYCIDWPSHFSHKKTFSIDFHGTGGFINNTQFGALKIKDAVVDRFRDDGTPRPDVERVNPDFKIDAHYRNGQLTISMNFSGASLHQRGYRSTTGEAPLKENLAANMLVRSGWQANPITVLDPFCGSGTVLIEAALMAADIAPGLKREKFGFENWQSHNKAMWQVIFDEAQARATLGKTRCKLKFYGSDIEPHLISIAKRNAENAGVAELIEFSVSDALDVTPPVSEGFLISNPPYGERLGNVTELLQLYYQLGDKFKKEFGGWKIAMLCSDVELISSLKLKADKQMKMFNGALECAFNIYTLHANSTRRDVPELPEGVDIIDIAPAFANRIKKNVKQFEKWAKKERIDSYRLYDADLPEYNVAIDRYVDYVVIQEYSAPATIPEAVTKRRISDVLLALPGALGIHPDRITLKTRERQKGANQYQKIDERKVEVITEEYGAKFKLNLTGYLDTGLFLDHRVTRKLVGDKAKGKNVLNLFAYTGSASVHAAIGGAKSVTTIDMSNTYINWAKENFALNGLSGAKYDFIQADCLQWIKDNSHQKYELIFIDPPTFSNSKRMEDSWDVQRDHAEMLGGLIKLLSPNGELIFSNNKRKFKMDIEALNQAGIDVTNIDHLCLPLDYKRNPHIHNVWLLTHAKK</sequence>
<feature type="chain" id="PRO_0000366824" description="Ribosomal RNA large subunit methyltransferase K/L">
    <location>
        <begin position="1"/>
        <end position="712"/>
    </location>
</feature>
<feature type="domain" description="THUMP" evidence="1">
    <location>
        <begin position="43"/>
        <end position="154"/>
    </location>
</feature>
<accession>Q07ZR3</accession>
<dbReference type="EC" id="2.1.1.173" evidence="1"/>
<dbReference type="EC" id="2.1.1.264" evidence="1"/>
<dbReference type="EMBL" id="CP000447">
    <property type="protein sequence ID" value="ABI72502.1"/>
    <property type="molecule type" value="Genomic_DNA"/>
</dbReference>
<dbReference type="SMR" id="Q07ZR3"/>
<dbReference type="STRING" id="318167.Sfri_2661"/>
<dbReference type="KEGG" id="sfr:Sfri_2661"/>
<dbReference type="eggNOG" id="COG0116">
    <property type="taxonomic scope" value="Bacteria"/>
</dbReference>
<dbReference type="eggNOG" id="COG1092">
    <property type="taxonomic scope" value="Bacteria"/>
</dbReference>
<dbReference type="HOGENOM" id="CLU_014042_2_0_6"/>
<dbReference type="OrthoDB" id="9809404at2"/>
<dbReference type="Proteomes" id="UP000000684">
    <property type="component" value="Chromosome"/>
</dbReference>
<dbReference type="GO" id="GO:0005737">
    <property type="term" value="C:cytoplasm"/>
    <property type="evidence" value="ECO:0007669"/>
    <property type="project" value="UniProtKB-SubCell"/>
</dbReference>
<dbReference type="GO" id="GO:0052915">
    <property type="term" value="F:23S rRNA (guanine(2445)-N(2))-methyltransferase activity"/>
    <property type="evidence" value="ECO:0007669"/>
    <property type="project" value="UniProtKB-UniRule"/>
</dbReference>
<dbReference type="GO" id="GO:0003723">
    <property type="term" value="F:RNA binding"/>
    <property type="evidence" value="ECO:0007669"/>
    <property type="project" value="UniProtKB-KW"/>
</dbReference>
<dbReference type="GO" id="GO:0070043">
    <property type="term" value="F:rRNA (guanine-N7-)-methyltransferase activity"/>
    <property type="evidence" value="ECO:0007669"/>
    <property type="project" value="UniProtKB-UniRule"/>
</dbReference>
<dbReference type="CDD" id="cd02440">
    <property type="entry name" value="AdoMet_MTases"/>
    <property type="match status" value="1"/>
</dbReference>
<dbReference type="CDD" id="cd11715">
    <property type="entry name" value="THUMP_AdoMetMT"/>
    <property type="match status" value="1"/>
</dbReference>
<dbReference type="FunFam" id="3.40.50.150:FF:000039">
    <property type="entry name" value="Ribosomal RNA large subunit methyltransferase K/L"/>
    <property type="match status" value="1"/>
</dbReference>
<dbReference type="Gene3D" id="3.30.2130.30">
    <property type="match status" value="1"/>
</dbReference>
<dbReference type="Gene3D" id="3.30.750.80">
    <property type="entry name" value="RNA methyltransferase domain (HRMD) like"/>
    <property type="match status" value="1"/>
</dbReference>
<dbReference type="Gene3D" id="3.40.50.150">
    <property type="entry name" value="Vaccinia Virus protein VP39"/>
    <property type="match status" value="2"/>
</dbReference>
<dbReference type="HAMAP" id="MF_01858">
    <property type="entry name" value="23SrRNA_methyltr_KL"/>
    <property type="match status" value="1"/>
</dbReference>
<dbReference type="InterPro" id="IPR017244">
    <property type="entry name" value="23SrRNA_methyltr_KL"/>
</dbReference>
<dbReference type="InterPro" id="IPR002052">
    <property type="entry name" value="DNA_methylase_N6_adenine_CS"/>
</dbReference>
<dbReference type="InterPro" id="IPR000241">
    <property type="entry name" value="RlmKL-like_Mtase"/>
</dbReference>
<dbReference type="InterPro" id="IPR053943">
    <property type="entry name" value="RlmKL-like_Mtase_CS"/>
</dbReference>
<dbReference type="InterPro" id="IPR054170">
    <property type="entry name" value="RlmL_1st"/>
</dbReference>
<dbReference type="InterPro" id="IPR019614">
    <property type="entry name" value="SAM-dep_methyl-trfase"/>
</dbReference>
<dbReference type="InterPro" id="IPR029063">
    <property type="entry name" value="SAM-dependent_MTases_sf"/>
</dbReference>
<dbReference type="InterPro" id="IPR004114">
    <property type="entry name" value="THUMP_dom"/>
</dbReference>
<dbReference type="NCBIfam" id="NF008748">
    <property type="entry name" value="PRK11783.1"/>
    <property type="match status" value="1"/>
</dbReference>
<dbReference type="PANTHER" id="PTHR47313">
    <property type="entry name" value="RIBOSOMAL RNA LARGE SUBUNIT METHYLTRANSFERASE K/L"/>
    <property type="match status" value="1"/>
</dbReference>
<dbReference type="PANTHER" id="PTHR47313:SF1">
    <property type="entry name" value="RIBOSOMAL RNA LARGE SUBUNIT METHYLTRANSFERASE K_L"/>
    <property type="match status" value="1"/>
</dbReference>
<dbReference type="Pfam" id="PF10672">
    <property type="entry name" value="Methyltrans_SAM"/>
    <property type="match status" value="1"/>
</dbReference>
<dbReference type="Pfam" id="PF22020">
    <property type="entry name" value="RlmL_1st"/>
    <property type="match status" value="1"/>
</dbReference>
<dbReference type="Pfam" id="PF02926">
    <property type="entry name" value="THUMP"/>
    <property type="match status" value="1"/>
</dbReference>
<dbReference type="Pfam" id="PF01170">
    <property type="entry name" value="UPF0020"/>
    <property type="match status" value="1"/>
</dbReference>
<dbReference type="PIRSF" id="PIRSF037618">
    <property type="entry name" value="RNA_Mtase_bacteria_prd"/>
    <property type="match status" value="1"/>
</dbReference>
<dbReference type="SMART" id="SM00981">
    <property type="entry name" value="THUMP"/>
    <property type="match status" value="1"/>
</dbReference>
<dbReference type="SUPFAM" id="SSF53335">
    <property type="entry name" value="S-adenosyl-L-methionine-dependent methyltransferases"/>
    <property type="match status" value="2"/>
</dbReference>
<dbReference type="PROSITE" id="PS51165">
    <property type="entry name" value="THUMP"/>
    <property type="match status" value="1"/>
</dbReference>
<dbReference type="PROSITE" id="PS01261">
    <property type="entry name" value="UPF0020"/>
    <property type="match status" value="1"/>
</dbReference>
<proteinExistence type="inferred from homology"/>
<evidence type="ECO:0000255" key="1">
    <source>
        <dbReference type="HAMAP-Rule" id="MF_01858"/>
    </source>
</evidence>
<keyword id="KW-0963">Cytoplasm</keyword>
<keyword id="KW-0489">Methyltransferase</keyword>
<keyword id="KW-1185">Reference proteome</keyword>
<keyword id="KW-0694">RNA-binding</keyword>
<keyword id="KW-0698">rRNA processing</keyword>
<keyword id="KW-0949">S-adenosyl-L-methionine</keyword>
<keyword id="KW-0808">Transferase</keyword>
<gene>
    <name evidence="1" type="primary">rlmL</name>
    <name type="ordered locus">Sfri_2661</name>
</gene>
<protein>
    <recommendedName>
        <fullName evidence="1">Ribosomal RNA large subunit methyltransferase K/L</fullName>
    </recommendedName>
    <domain>
        <recommendedName>
            <fullName evidence="1">23S rRNA m2G2445 methyltransferase</fullName>
            <ecNumber evidence="1">2.1.1.173</ecNumber>
        </recommendedName>
        <alternativeName>
            <fullName evidence="1">rRNA (guanine-N(2)-)-methyltransferase RlmL</fullName>
        </alternativeName>
    </domain>
    <domain>
        <recommendedName>
            <fullName evidence="1">23S rRNA m7G2069 methyltransferase</fullName>
            <ecNumber evidence="1">2.1.1.264</ecNumber>
        </recommendedName>
        <alternativeName>
            <fullName evidence="1">rRNA (guanine-N(7)-)-methyltransferase RlmK</fullName>
        </alternativeName>
    </domain>
</protein>
<reference key="1">
    <citation type="submission" date="2006-08" db="EMBL/GenBank/DDBJ databases">
        <title>Complete sequence of Shewanella frigidimarina NCIMB 400.</title>
        <authorList>
            <consortium name="US DOE Joint Genome Institute"/>
            <person name="Copeland A."/>
            <person name="Lucas S."/>
            <person name="Lapidus A."/>
            <person name="Barry K."/>
            <person name="Detter J.C."/>
            <person name="Glavina del Rio T."/>
            <person name="Hammon N."/>
            <person name="Israni S."/>
            <person name="Dalin E."/>
            <person name="Tice H."/>
            <person name="Pitluck S."/>
            <person name="Fredrickson J.K."/>
            <person name="Kolker E."/>
            <person name="McCuel L.A."/>
            <person name="DiChristina T."/>
            <person name="Nealson K.H."/>
            <person name="Newman D."/>
            <person name="Tiedje J.M."/>
            <person name="Zhou J."/>
            <person name="Romine M.F."/>
            <person name="Culley D.E."/>
            <person name="Serres M."/>
            <person name="Chertkov O."/>
            <person name="Brettin T."/>
            <person name="Bruce D."/>
            <person name="Han C."/>
            <person name="Tapia R."/>
            <person name="Gilna P."/>
            <person name="Schmutz J."/>
            <person name="Larimer F."/>
            <person name="Land M."/>
            <person name="Hauser L."/>
            <person name="Kyrpides N."/>
            <person name="Mikhailova N."/>
            <person name="Richardson P."/>
        </authorList>
    </citation>
    <scope>NUCLEOTIDE SEQUENCE [LARGE SCALE GENOMIC DNA]</scope>
    <source>
        <strain>NCIMB 400</strain>
    </source>
</reference>
<organism>
    <name type="scientific">Shewanella frigidimarina (strain NCIMB 400)</name>
    <dbReference type="NCBI Taxonomy" id="318167"/>
    <lineage>
        <taxon>Bacteria</taxon>
        <taxon>Pseudomonadati</taxon>
        <taxon>Pseudomonadota</taxon>
        <taxon>Gammaproteobacteria</taxon>
        <taxon>Alteromonadales</taxon>
        <taxon>Shewanellaceae</taxon>
        <taxon>Shewanella</taxon>
    </lineage>
</organism>
<name>RLMKL_SHEFN</name>
<comment type="function">
    <text evidence="1">Specifically methylates the guanine in position 2445 (m2G2445) and the guanine in position 2069 (m7G2069) of 23S rRNA.</text>
</comment>
<comment type="catalytic activity">
    <reaction evidence="1">
        <text>guanosine(2445) in 23S rRNA + S-adenosyl-L-methionine = N(2)-methylguanosine(2445) in 23S rRNA + S-adenosyl-L-homocysteine + H(+)</text>
        <dbReference type="Rhea" id="RHEA:42740"/>
        <dbReference type="Rhea" id="RHEA-COMP:10215"/>
        <dbReference type="Rhea" id="RHEA-COMP:10216"/>
        <dbReference type="ChEBI" id="CHEBI:15378"/>
        <dbReference type="ChEBI" id="CHEBI:57856"/>
        <dbReference type="ChEBI" id="CHEBI:59789"/>
        <dbReference type="ChEBI" id="CHEBI:74269"/>
        <dbReference type="ChEBI" id="CHEBI:74481"/>
        <dbReference type="EC" id="2.1.1.173"/>
    </reaction>
</comment>
<comment type="catalytic activity">
    <reaction evidence="1">
        <text>guanosine(2069) in 23S rRNA + S-adenosyl-L-methionine = N(2)-methylguanosine(2069) in 23S rRNA + S-adenosyl-L-homocysteine + H(+)</text>
        <dbReference type="Rhea" id="RHEA:43772"/>
        <dbReference type="Rhea" id="RHEA-COMP:10688"/>
        <dbReference type="Rhea" id="RHEA-COMP:10689"/>
        <dbReference type="ChEBI" id="CHEBI:15378"/>
        <dbReference type="ChEBI" id="CHEBI:57856"/>
        <dbReference type="ChEBI" id="CHEBI:59789"/>
        <dbReference type="ChEBI" id="CHEBI:74269"/>
        <dbReference type="ChEBI" id="CHEBI:74481"/>
        <dbReference type="EC" id="2.1.1.264"/>
    </reaction>
</comment>
<comment type="subcellular location">
    <subcellularLocation>
        <location evidence="1">Cytoplasm</location>
    </subcellularLocation>
</comment>
<comment type="similarity">
    <text evidence="1">Belongs to the methyltransferase superfamily. RlmKL family.</text>
</comment>